<accession>O15020</accession>
<accession>O14872</accession>
<accession>O14873</accession>
<name>SPTN2_HUMAN</name>
<evidence type="ECO:0000250" key="1">
    <source>
        <dbReference type="UniProtKB" id="Q9QWN8"/>
    </source>
</evidence>
<evidence type="ECO:0000255" key="2"/>
<evidence type="ECO:0000255" key="3">
    <source>
        <dbReference type="PROSITE-ProRule" id="PRU00044"/>
    </source>
</evidence>
<evidence type="ECO:0000255" key="4">
    <source>
        <dbReference type="PROSITE-ProRule" id="PRU00145"/>
    </source>
</evidence>
<evidence type="ECO:0000256" key="5">
    <source>
        <dbReference type="SAM" id="MobiDB-lite"/>
    </source>
</evidence>
<evidence type="ECO:0000269" key="6">
    <source>
    </source>
</evidence>
<evidence type="ECO:0000269" key="7">
    <source>
    </source>
</evidence>
<evidence type="ECO:0000269" key="8">
    <source>
    </source>
</evidence>
<evidence type="ECO:0000269" key="9">
    <source>
    </source>
</evidence>
<evidence type="ECO:0000269" key="10">
    <source>
    </source>
</evidence>
<evidence type="ECO:0000269" key="11">
    <source>
    </source>
</evidence>
<evidence type="ECO:0000303" key="12">
    <source ref="4"/>
</evidence>
<evidence type="ECO:0000305" key="13"/>
<evidence type="ECO:0007744" key="14">
    <source>
    </source>
</evidence>
<evidence type="ECO:0007744" key="15">
    <source>
    </source>
</evidence>
<evidence type="ECO:0007744" key="16">
    <source>
    </source>
</evidence>
<evidence type="ECO:0007744" key="17">
    <source>
    </source>
</evidence>
<evidence type="ECO:0007744" key="18">
    <source>
    </source>
</evidence>
<evidence type="ECO:0007744" key="19">
    <source>
    </source>
</evidence>
<evidence type="ECO:0007829" key="20">
    <source>
        <dbReference type="PDB" id="1WJM"/>
    </source>
</evidence>
<evidence type="ECO:0007829" key="21">
    <source>
        <dbReference type="PDB" id="1WYQ"/>
    </source>
</evidence>
<comment type="function">
    <text>Probably plays an important role in neuronal membrane skeleton.</text>
</comment>
<comment type="subcellular location">
    <subcellularLocation>
        <location>Cytoplasm</location>
        <location>Cytoskeleton</location>
    </subcellularLocation>
    <subcellularLocation>
        <location>Cytoplasm</location>
        <location>Cell cortex</location>
    </subcellularLocation>
</comment>
<comment type="alternative products">
    <event type="alternative splicing"/>
    <isoform>
        <id>O15020-1</id>
        <name>1</name>
        <sequence type="displayed"/>
    </isoform>
    <isoform>
        <id>O15020-2</id>
        <name>2</name>
        <sequence type="described" ref="VSP_000722"/>
    </isoform>
</comment>
<comment type="tissue specificity">
    <text>Highly expressed in brain, kidney, pancreas, and liver, and at lower levels in lung and placenta.</text>
</comment>
<comment type="disease" evidence="6 8">
    <disease id="DI-01069">
        <name>Spinocerebellar ataxia 5</name>
        <acronym>SCA5</acronym>
        <description>Spinocerebellar ataxia is a clinically and genetically heterogeneous group of cerebellar disorders. Patients show progressive incoordination of gait and often poor coordination of hands, speech and eye movements, due to degeneration of the cerebellum with variable involvement of the brainstem and spinal cord. SCA5 is an autosomal dominant cerebellar ataxia (ADCA). It is a slowly progressive disorder with variable age at onset, ranging between 10 and 50 years.</description>
        <dbReference type="MIM" id="600224"/>
    </disease>
    <text>The disease is caused by variants affecting the gene represented in this entry.</text>
</comment>
<comment type="disease" evidence="9 10">
    <disease id="DI-03864">
        <name>Spinocerebellar ataxia, autosomal recessive, 14</name>
        <acronym>SCAR14</acronym>
        <description>A form of spinocerebellar ataxia, a clinically and genetically heterogeneous group of cerebellar disorders. Patients show progressive incoordination of gait and often poor coordination of hands, speech and eye movements, due to degeneration of the cerebellum with variable involvement of the brainstem and spinal cord. SCAR14 is characterized by delayed psychomotor development, severe early onset gait ataxia, eye movement abnormalities, cerebellar atrophy on brain imaging, and intellectual disability.</description>
        <dbReference type="MIM" id="615386"/>
    </disease>
    <text>The disease is caused by variants affecting the gene represented in this entry.</text>
</comment>
<comment type="similarity">
    <text evidence="13">Belongs to the spectrin family.</text>
</comment>
<comment type="sequence caution" evidence="13">
    <conflict type="erroneous initiation">
        <sequence resource="EMBL-CDS" id="BAA32700"/>
    </conflict>
    <text>Extended N-terminus.</text>
</comment>
<protein>
    <recommendedName>
        <fullName>Spectrin beta chain, non-erythrocytic 2</fullName>
    </recommendedName>
    <alternativeName>
        <fullName>Beta-III spectrin</fullName>
    </alternativeName>
    <alternativeName>
        <fullName>Spinocerebellar ataxia 5 protein</fullName>
    </alternativeName>
</protein>
<dbReference type="EMBL" id="AB008567">
    <property type="protein sequence ID" value="BAA32700.2"/>
    <property type="status" value="ALT_INIT"/>
    <property type="molecule type" value="mRNA"/>
</dbReference>
<dbReference type="EMBL" id="AP001157">
    <property type="status" value="NOT_ANNOTATED_CDS"/>
    <property type="molecule type" value="Genomic_DNA"/>
</dbReference>
<dbReference type="EMBL" id="AF079569">
    <property type="protein sequence ID" value="AAC80006.1"/>
    <property type="molecule type" value="mRNA"/>
</dbReference>
<dbReference type="EMBL" id="AF026487">
    <property type="protein sequence ID" value="AAC79502.1"/>
    <property type="molecule type" value="mRNA"/>
</dbReference>
<dbReference type="EMBL" id="AF026488">
    <property type="protein sequence ID" value="AAC79503.1"/>
    <property type="molecule type" value="mRNA"/>
</dbReference>
<dbReference type="EMBL" id="AF026488">
    <property type="protein sequence ID" value="AAC79504.1"/>
    <property type="molecule type" value="mRNA"/>
</dbReference>
<dbReference type="CCDS" id="CCDS8150.1">
    <molecule id="O15020-1"/>
</dbReference>
<dbReference type="RefSeq" id="NP_008877.2">
    <molecule id="O15020-1"/>
    <property type="nucleotide sequence ID" value="NM_006946.4"/>
</dbReference>
<dbReference type="RefSeq" id="XP_005274249.1">
    <property type="nucleotide sequence ID" value="XM_005274192.4"/>
</dbReference>
<dbReference type="RefSeq" id="XP_005274250.1">
    <molecule id="O15020-1"/>
    <property type="nucleotide sequence ID" value="XM_005274193.4"/>
</dbReference>
<dbReference type="RefSeq" id="XP_006718734.1">
    <molecule id="O15020-1"/>
    <property type="nucleotide sequence ID" value="XM_006718671.5"/>
</dbReference>
<dbReference type="RefSeq" id="XP_016873663.1">
    <molecule id="O15020-1"/>
    <property type="nucleotide sequence ID" value="XM_017018174.2"/>
</dbReference>
<dbReference type="RefSeq" id="XP_016873664.1">
    <molecule id="O15020-1"/>
    <property type="nucleotide sequence ID" value="XM_017018175.3"/>
</dbReference>
<dbReference type="RefSeq" id="XP_016873665.1">
    <molecule id="O15020-1"/>
    <property type="nucleotide sequence ID" value="XM_017018176.2"/>
</dbReference>
<dbReference type="RefSeq" id="XP_016873666.1">
    <molecule id="O15020-1"/>
    <property type="nucleotide sequence ID" value="XM_017018177.3"/>
</dbReference>
<dbReference type="RefSeq" id="XP_016873667.1">
    <molecule id="O15020-1"/>
    <property type="nucleotide sequence ID" value="XM_017018178.2"/>
</dbReference>
<dbReference type="RefSeq" id="XP_047283444.1">
    <molecule id="O15020-1"/>
    <property type="nucleotide sequence ID" value="XM_047427488.1"/>
</dbReference>
<dbReference type="RefSeq" id="XP_047283445.1">
    <molecule id="O15020-1"/>
    <property type="nucleotide sequence ID" value="XM_047427489.1"/>
</dbReference>
<dbReference type="RefSeq" id="XP_047283446.1">
    <molecule id="O15020-1"/>
    <property type="nucleotide sequence ID" value="XM_047427490.1"/>
</dbReference>
<dbReference type="RefSeq" id="XP_047283447.1">
    <molecule id="O15020-1"/>
    <property type="nucleotide sequence ID" value="XM_047427491.1"/>
</dbReference>
<dbReference type="RefSeq" id="XP_047283448.1">
    <molecule id="O15020-1"/>
    <property type="nucleotide sequence ID" value="XM_047427492.1"/>
</dbReference>
<dbReference type="RefSeq" id="XP_047283449.1">
    <molecule id="O15020-1"/>
    <property type="nucleotide sequence ID" value="XM_047427493.1"/>
</dbReference>
<dbReference type="RefSeq" id="XP_047283450.1">
    <molecule id="O15020-1"/>
    <property type="nucleotide sequence ID" value="XM_047427494.1"/>
</dbReference>
<dbReference type="RefSeq" id="XP_047283451.1">
    <molecule id="O15020-1"/>
    <property type="nucleotide sequence ID" value="XM_047427495.1"/>
</dbReference>
<dbReference type="PDB" id="1WJM">
    <property type="method" value="NMR"/>
    <property type="chains" value="A=2219-2328"/>
</dbReference>
<dbReference type="PDB" id="1WYQ">
    <property type="method" value="NMR"/>
    <property type="chains" value="A=178-291"/>
</dbReference>
<dbReference type="PDB" id="6ANU">
    <property type="method" value="EM"/>
    <property type="resolution" value="7.00 A"/>
    <property type="chains" value="a/b/c/d/e/f=1-284"/>
</dbReference>
<dbReference type="PDBsum" id="1WJM"/>
<dbReference type="PDBsum" id="1WYQ"/>
<dbReference type="PDBsum" id="6ANU"/>
<dbReference type="BMRB" id="O15020"/>
<dbReference type="EMDB" id="EMD-8886"/>
<dbReference type="SMR" id="O15020"/>
<dbReference type="BioGRID" id="112590">
    <property type="interactions" value="179"/>
</dbReference>
<dbReference type="DIP" id="DIP-47270N"/>
<dbReference type="FunCoup" id="O15020">
    <property type="interactions" value="562"/>
</dbReference>
<dbReference type="IntAct" id="O15020">
    <property type="interactions" value="69"/>
</dbReference>
<dbReference type="MINT" id="O15020"/>
<dbReference type="STRING" id="9606.ENSP00000432568"/>
<dbReference type="CarbonylDB" id="O15020"/>
<dbReference type="GlyGen" id="O15020">
    <property type="glycosylation" value="2 sites, 1 N-linked glycan (1 site), 1 O-linked glycan (1 site)"/>
</dbReference>
<dbReference type="iPTMnet" id="O15020"/>
<dbReference type="MetOSite" id="O15020"/>
<dbReference type="PhosphoSitePlus" id="O15020"/>
<dbReference type="SwissPalm" id="O15020"/>
<dbReference type="BioMuta" id="SPTBN2"/>
<dbReference type="jPOST" id="O15020"/>
<dbReference type="MassIVE" id="O15020"/>
<dbReference type="PaxDb" id="9606-ENSP00000432568"/>
<dbReference type="PeptideAtlas" id="O15020"/>
<dbReference type="ProteomicsDB" id="48376">
    <molecule id="O15020-1"/>
</dbReference>
<dbReference type="ProteomicsDB" id="48377">
    <molecule id="O15020-2"/>
</dbReference>
<dbReference type="Pumba" id="O15020"/>
<dbReference type="Antibodypedia" id="4075">
    <property type="antibodies" value="742 antibodies from 26 providers"/>
</dbReference>
<dbReference type="DNASU" id="6712"/>
<dbReference type="Ensembl" id="ENST00000309996.7">
    <molecule id="O15020-1"/>
    <property type="protein sequence ID" value="ENSP00000311489.2"/>
    <property type="gene ID" value="ENSG00000173898.16"/>
</dbReference>
<dbReference type="Ensembl" id="ENST00000529997.5">
    <molecule id="O15020-2"/>
    <property type="protein sequence ID" value="ENSP00000433593.1"/>
    <property type="gene ID" value="ENSG00000173898.16"/>
</dbReference>
<dbReference type="Ensembl" id="ENST00000533211.6">
    <molecule id="O15020-1"/>
    <property type="protein sequence ID" value="ENSP00000432568.1"/>
    <property type="gene ID" value="ENSG00000173898.16"/>
</dbReference>
<dbReference type="Ensembl" id="ENST00000611817.5">
    <molecule id="O15020-1"/>
    <property type="protein sequence ID" value="ENSP00000480692.2"/>
    <property type="gene ID" value="ENSG00000173898.16"/>
</dbReference>
<dbReference type="Ensembl" id="ENST00000647510.2">
    <molecule id="O15020-1"/>
    <property type="protein sequence ID" value="ENSP00000508362.1"/>
    <property type="gene ID" value="ENSG00000173898.16"/>
</dbReference>
<dbReference type="Ensembl" id="ENST00000713738.1">
    <molecule id="O15020-1"/>
    <property type="protein sequence ID" value="ENSP00000519042.1"/>
    <property type="gene ID" value="ENSG00000173898.16"/>
</dbReference>
<dbReference type="GeneID" id="6712"/>
<dbReference type="KEGG" id="hsa:6712"/>
<dbReference type="MANE-Select" id="ENST00000533211.6">
    <property type="protein sequence ID" value="ENSP00000432568.1"/>
    <property type="RefSeq nucleotide sequence ID" value="NM_006946.4"/>
    <property type="RefSeq protein sequence ID" value="NP_008877.2"/>
</dbReference>
<dbReference type="UCSC" id="uc001ojc.2">
    <molecule id="O15020-1"/>
    <property type="organism name" value="human"/>
</dbReference>
<dbReference type="AGR" id="HGNC:11276"/>
<dbReference type="CTD" id="6712"/>
<dbReference type="DisGeNET" id="6712"/>
<dbReference type="GeneCards" id="SPTBN2"/>
<dbReference type="HGNC" id="HGNC:11276">
    <property type="gene designation" value="SPTBN2"/>
</dbReference>
<dbReference type="HPA" id="ENSG00000173898">
    <property type="expression patterns" value="Tissue enhanced (brain, skin)"/>
</dbReference>
<dbReference type="MalaCards" id="SPTBN2"/>
<dbReference type="MIM" id="600224">
    <property type="type" value="phenotype"/>
</dbReference>
<dbReference type="MIM" id="604985">
    <property type="type" value="gene"/>
</dbReference>
<dbReference type="MIM" id="615386">
    <property type="type" value="phenotype"/>
</dbReference>
<dbReference type="neXtProt" id="NX_O15020"/>
<dbReference type="OpenTargets" id="ENSG00000173898"/>
<dbReference type="Orphanet" id="352403">
    <property type="disease" value="Spectrin-associated autosomal recessive cerebellar ataxia"/>
</dbReference>
<dbReference type="Orphanet" id="98766">
    <property type="disease" value="Spinocerebellar ataxia type 5"/>
</dbReference>
<dbReference type="PharmGKB" id="PA36105"/>
<dbReference type="VEuPathDB" id="HostDB:ENSG00000173898"/>
<dbReference type="eggNOG" id="KOG0517">
    <property type="taxonomic scope" value="Eukaryota"/>
</dbReference>
<dbReference type="GeneTree" id="ENSGT00940000158847"/>
<dbReference type="HOGENOM" id="CLU_000146_0_0_1"/>
<dbReference type="InParanoid" id="O15020"/>
<dbReference type="OMA" id="CDPAIIV"/>
<dbReference type="OrthoDB" id="5865767at2759"/>
<dbReference type="PAN-GO" id="O15020">
    <property type="GO annotations" value="7 GO annotations based on evolutionary models"/>
</dbReference>
<dbReference type="PhylomeDB" id="O15020"/>
<dbReference type="TreeFam" id="TF313446"/>
<dbReference type="PathwayCommons" id="O15020"/>
<dbReference type="Reactome" id="R-HSA-2132295">
    <property type="pathway name" value="MHC class II antigen presentation"/>
</dbReference>
<dbReference type="Reactome" id="R-HSA-375165">
    <property type="pathway name" value="NCAM signaling for neurite out-growth"/>
</dbReference>
<dbReference type="Reactome" id="R-HSA-445095">
    <property type="pathway name" value="Interaction between L1 and Ankyrins"/>
</dbReference>
<dbReference type="Reactome" id="R-HSA-5673001">
    <property type="pathway name" value="RAF/MAP kinase cascade"/>
</dbReference>
<dbReference type="Reactome" id="R-HSA-6807878">
    <property type="pathway name" value="COPI-mediated anterograde transport"/>
</dbReference>
<dbReference type="SignaLink" id="O15020"/>
<dbReference type="BioGRID-ORCS" id="6712">
    <property type="hits" value="26 hits in 1151 CRISPR screens"/>
</dbReference>
<dbReference type="CD-CODE" id="FB4E32DD">
    <property type="entry name" value="Presynaptic clusters and postsynaptic densities"/>
</dbReference>
<dbReference type="ChiTaRS" id="SPTBN2">
    <property type="organism name" value="human"/>
</dbReference>
<dbReference type="EvolutionaryTrace" id="O15020"/>
<dbReference type="GeneWiki" id="SPTBN2"/>
<dbReference type="GenomeRNAi" id="6712"/>
<dbReference type="Pharos" id="O15020">
    <property type="development level" value="Tbio"/>
</dbReference>
<dbReference type="PRO" id="PR:O15020"/>
<dbReference type="Proteomes" id="UP000005640">
    <property type="component" value="Chromosome 11"/>
</dbReference>
<dbReference type="RNAct" id="O15020">
    <property type="molecule type" value="protein"/>
</dbReference>
<dbReference type="Bgee" id="ENSG00000173898">
    <property type="expression patterns" value="Expressed in right hemisphere of cerebellum and 159 other cell types or tissues"/>
</dbReference>
<dbReference type="ExpressionAtlas" id="O15020">
    <property type="expression patterns" value="baseline and differential"/>
</dbReference>
<dbReference type="GO" id="GO:0016324">
    <property type="term" value="C:apical plasma membrane"/>
    <property type="evidence" value="ECO:0007669"/>
    <property type="project" value="Ensembl"/>
</dbReference>
<dbReference type="GO" id="GO:0030054">
    <property type="term" value="C:cell junction"/>
    <property type="evidence" value="ECO:0000318"/>
    <property type="project" value="GO_Central"/>
</dbReference>
<dbReference type="GO" id="GO:0042995">
    <property type="term" value="C:cell projection"/>
    <property type="evidence" value="ECO:0000318"/>
    <property type="project" value="GO_Central"/>
</dbReference>
<dbReference type="GO" id="GO:0030864">
    <property type="term" value="C:cortical actin cytoskeleton"/>
    <property type="evidence" value="ECO:0000318"/>
    <property type="project" value="GO_Central"/>
</dbReference>
<dbReference type="GO" id="GO:0005829">
    <property type="term" value="C:cytosol"/>
    <property type="evidence" value="ECO:0000314"/>
    <property type="project" value="HPA"/>
</dbReference>
<dbReference type="GO" id="GO:0005615">
    <property type="term" value="C:extracellular space"/>
    <property type="evidence" value="ECO:0007005"/>
    <property type="project" value="UniProtKB"/>
</dbReference>
<dbReference type="GO" id="GO:0098978">
    <property type="term" value="C:glutamatergic synapse"/>
    <property type="evidence" value="ECO:0007669"/>
    <property type="project" value="Ensembl"/>
</dbReference>
<dbReference type="GO" id="GO:0043231">
    <property type="term" value="C:intracellular membrane-bounded organelle"/>
    <property type="evidence" value="ECO:0000314"/>
    <property type="project" value="HPA"/>
</dbReference>
<dbReference type="GO" id="GO:0043025">
    <property type="term" value="C:neuronal cell body"/>
    <property type="evidence" value="ECO:0007669"/>
    <property type="project" value="Ensembl"/>
</dbReference>
<dbReference type="GO" id="GO:0098688">
    <property type="term" value="C:parallel fiber to Purkinje cell synapse"/>
    <property type="evidence" value="ECO:0007669"/>
    <property type="project" value="Ensembl"/>
</dbReference>
<dbReference type="GO" id="GO:0033010">
    <property type="term" value="C:paranodal junction"/>
    <property type="evidence" value="ECO:0007669"/>
    <property type="project" value="Ensembl"/>
</dbReference>
<dbReference type="GO" id="GO:0005886">
    <property type="term" value="C:plasma membrane"/>
    <property type="evidence" value="ECO:0000314"/>
    <property type="project" value="HPA"/>
</dbReference>
<dbReference type="GO" id="GO:0099189">
    <property type="term" value="C:postsynaptic spectrin-associated cytoskeleton"/>
    <property type="evidence" value="ECO:0007669"/>
    <property type="project" value="Ensembl"/>
</dbReference>
<dbReference type="GO" id="GO:0098793">
    <property type="term" value="C:presynapse"/>
    <property type="evidence" value="ECO:0007669"/>
    <property type="project" value="Ensembl"/>
</dbReference>
<dbReference type="GO" id="GO:0008091">
    <property type="term" value="C:spectrin"/>
    <property type="evidence" value="ECO:0000314"/>
    <property type="project" value="UniProtKB"/>
</dbReference>
<dbReference type="GO" id="GO:0003779">
    <property type="term" value="F:actin binding"/>
    <property type="evidence" value="ECO:0000304"/>
    <property type="project" value="ProtInc"/>
</dbReference>
<dbReference type="GO" id="GO:0051015">
    <property type="term" value="F:actin filament binding"/>
    <property type="evidence" value="ECO:0000318"/>
    <property type="project" value="GO_Central"/>
</dbReference>
<dbReference type="GO" id="GO:0045296">
    <property type="term" value="F:cadherin binding"/>
    <property type="evidence" value="ECO:0007005"/>
    <property type="project" value="BHF-UCL"/>
</dbReference>
<dbReference type="GO" id="GO:0005543">
    <property type="term" value="F:phospholipid binding"/>
    <property type="evidence" value="ECO:0007669"/>
    <property type="project" value="InterPro"/>
</dbReference>
<dbReference type="GO" id="GO:0005200">
    <property type="term" value="F:structural constituent of cytoskeleton"/>
    <property type="evidence" value="ECO:0000304"/>
    <property type="project" value="UniProtKB"/>
</dbReference>
<dbReference type="GO" id="GO:0099186">
    <property type="term" value="F:structural constituent of postsynapse"/>
    <property type="evidence" value="ECO:0007669"/>
    <property type="project" value="Ensembl"/>
</dbReference>
<dbReference type="GO" id="GO:0098918">
    <property type="term" value="F:structural constituent of synapse"/>
    <property type="evidence" value="ECO:0000318"/>
    <property type="project" value="GO_Central"/>
</dbReference>
<dbReference type="GO" id="GO:0030036">
    <property type="term" value="P:actin cytoskeleton organization"/>
    <property type="evidence" value="ECO:0000318"/>
    <property type="project" value="GO_Central"/>
</dbReference>
<dbReference type="GO" id="GO:0051693">
    <property type="term" value="P:actin filament capping"/>
    <property type="evidence" value="ECO:0007669"/>
    <property type="project" value="UniProtKB-KW"/>
</dbReference>
<dbReference type="GO" id="GO:0030534">
    <property type="term" value="P:adult behavior"/>
    <property type="evidence" value="ECO:0007669"/>
    <property type="project" value="Ensembl"/>
</dbReference>
<dbReference type="GO" id="GO:0021692">
    <property type="term" value="P:cerebellar Purkinje cell layer morphogenesis"/>
    <property type="evidence" value="ECO:0007669"/>
    <property type="project" value="Ensembl"/>
</dbReference>
<dbReference type="GO" id="GO:0035264">
    <property type="term" value="P:multicellular organism growth"/>
    <property type="evidence" value="ECO:0007669"/>
    <property type="project" value="Ensembl"/>
</dbReference>
<dbReference type="GO" id="GO:0099150">
    <property type="term" value="P:regulation of postsynaptic specialization assembly"/>
    <property type="evidence" value="ECO:0007669"/>
    <property type="project" value="Ensembl"/>
</dbReference>
<dbReference type="GO" id="GO:0007416">
    <property type="term" value="P:synapse assembly"/>
    <property type="evidence" value="ECO:0007669"/>
    <property type="project" value="Ensembl"/>
</dbReference>
<dbReference type="GO" id="GO:0016192">
    <property type="term" value="P:vesicle-mediated transport"/>
    <property type="evidence" value="ECO:0000314"/>
    <property type="project" value="UniProtKB"/>
</dbReference>
<dbReference type="CDD" id="cd21246">
    <property type="entry name" value="CH_SPTB-like_rpt1"/>
    <property type="match status" value="1"/>
</dbReference>
<dbReference type="CDD" id="cd21321">
    <property type="entry name" value="CH_SPTBN2_rpt2"/>
    <property type="match status" value="1"/>
</dbReference>
<dbReference type="CDD" id="cd10571">
    <property type="entry name" value="PH_beta_spectrin"/>
    <property type="match status" value="1"/>
</dbReference>
<dbReference type="CDD" id="cd00176">
    <property type="entry name" value="SPEC"/>
    <property type="match status" value="8"/>
</dbReference>
<dbReference type="FunFam" id="1.10.418.10:FF:000003">
    <property type="entry name" value="Spectrin beta chain"/>
    <property type="match status" value="1"/>
</dbReference>
<dbReference type="FunFam" id="1.10.418.10:FF:000004">
    <property type="entry name" value="Spectrin beta chain"/>
    <property type="match status" value="1"/>
</dbReference>
<dbReference type="FunFam" id="1.20.58.60:FF:000011">
    <property type="entry name" value="Spectrin beta chain"/>
    <property type="match status" value="1"/>
</dbReference>
<dbReference type="FunFam" id="1.20.58.60:FF:000018">
    <property type="entry name" value="Spectrin beta chain"/>
    <property type="match status" value="1"/>
</dbReference>
<dbReference type="FunFam" id="1.20.58.60:FF:000019">
    <property type="entry name" value="Spectrin beta chain"/>
    <property type="match status" value="1"/>
</dbReference>
<dbReference type="FunFam" id="1.20.58.60:FF:000028">
    <property type="entry name" value="Spectrin beta chain"/>
    <property type="match status" value="1"/>
</dbReference>
<dbReference type="FunFam" id="1.20.58.60:FF:000033">
    <property type="entry name" value="Spectrin beta chain"/>
    <property type="match status" value="1"/>
</dbReference>
<dbReference type="FunFam" id="1.20.58.60:FF:000049">
    <property type="entry name" value="Spectrin beta chain"/>
    <property type="match status" value="1"/>
</dbReference>
<dbReference type="FunFam" id="1.20.58.60:FF:000059">
    <property type="entry name" value="Spectrin beta chain"/>
    <property type="match status" value="1"/>
</dbReference>
<dbReference type="FunFam" id="1.20.58.60:FF:000083">
    <property type="entry name" value="Spectrin beta chain"/>
    <property type="match status" value="1"/>
</dbReference>
<dbReference type="FunFam" id="1.20.58.60:FF:000106">
    <property type="entry name" value="Spectrin beta chain"/>
    <property type="match status" value="1"/>
</dbReference>
<dbReference type="FunFam" id="1.20.58.60:FF:000130">
    <property type="entry name" value="Spectrin beta chain"/>
    <property type="match status" value="1"/>
</dbReference>
<dbReference type="FunFam" id="1.20.58.60:FF:000179">
    <property type="entry name" value="Spectrin beta chain"/>
    <property type="match status" value="1"/>
</dbReference>
<dbReference type="FunFam" id="1.20.58.60:FF:000373">
    <property type="entry name" value="Spectrin beta chain"/>
    <property type="match status" value="1"/>
</dbReference>
<dbReference type="FunFam" id="2.30.29.30:FF:000024">
    <property type="entry name" value="Spectrin beta chain"/>
    <property type="match status" value="1"/>
</dbReference>
<dbReference type="Gene3D" id="1.20.58.60">
    <property type="match status" value="13"/>
</dbReference>
<dbReference type="Gene3D" id="1.10.418.10">
    <property type="entry name" value="Calponin-like domain"/>
    <property type="match status" value="2"/>
</dbReference>
<dbReference type="Gene3D" id="2.30.29.30">
    <property type="entry name" value="Pleckstrin-homology domain (PH domain)/Phosphotyrosine-binding domain (PTB)"/>
    <property type="match status" value="1"/>
</dbReference>
<dbReference type="InterPro" id="IPR001589">
    <property type="entry name" value="Actinin_actin-bd_CS"/>
</dbReference>
<dbReference type="InterPro" id="IPR001715">
    <property type="entry name" value="CH_dom"/>
</dbReference>
<dbReference type="InterPro" id="IPR036872">
    <property type="entry name" value="CH_dom_sf"/>
</dbReference>
<dbReference type="InterPro" id="IPR011993">
    <property type="entry name" value="PH-like_dom_sf"/>
</dbReference>
<dbReference type="InterPro" id="IPR041681">
    <property type="entry name" value="PH_9"/>
</dbReference>
<dbReference type="InterPro" id="IPR001605">
    <property type="entry name" value="PH_dom-spectrin-type"/>
</dbReference>
<dbReference type="InterPro" id="IPR001849">
    <property type="entry name" value="PH_domain"/>
</dbReference>
<dbReference type="InterPro" id="IPR018159">
    <property type="entry name" value="Spectrin/alpha-actinin"/>
</dbReference>
<dbReference type="InterPro" id="IPR016343">
    <property type="entry name" value="Spectrin_bsu"/>
</dbReference>
<dbReference type="InterPro" id="IPR002017">
    <property type="entry name" value="Spectrin_repeat"/>
</dbReference>
<dbReference type="PANTHER" id="PTHR11915">
    <property type="entry name" value="SPECTRIN/FILAMIN RELATED CYTOSKELETAL PROTEIN"/>
    <property type="match status" value="1"/>
</dbReference>
<dbReference type="Pfam" id="PF00307">
    <property type="entry name" value="CH"/>
    <property type="match status" value="2"/>
</dbReference>
<dbReference type="Pfam" id="PF15410">
    <property type="entry name" value="PH_9"/>
    <property type="match status" value="1"/>
</dbReference>
<dbReference type="Pfam" id="PF00435">
    <property type="entry name" value="Spectrin"/>
    <property type="match status" value="17"/>
</dbReference>
<dbReference type="PIRSF" id="PIRSF002297">
    <property type="entry name" value="Spectrin_beta_subunit"/>
    <property type="match status" value="1"/>
</dbReference>
<dbReference type="PRINTS" id="PR00683">
    <property type="entry name" value="SPECTRINPH"/>
</dbReference>
<dbReference type="SMART" id="SM00033">
    <property type="entry name" value="CH"/>
    <property type="match status" value="2"/>
</dbReference>
<dbReference type="SMART" id="SM00233">
    <property type="entry name" value="PH"/>
    <property type="match status" value="1"/>
</dbReference>
<dbReference type="SMART" id="SM00150">
    <property type="entry name" value="SPEC"/>
    <property type="match status" value="17"/>
</dbReference>
<dbReference type="SUPFAM" id="SSF47576">
    <property type="entry name" value="Calponin-homology domain, CH-domain"/>
    <property type="match status" value="1"/>
</dbReference>
<dbReference type="SUPFAM" id="SSF50729">
    <property type="entry name" value="PH domain-like"/>
    <property type="match status" value="1"/>
</dbReference>
<dbReference type="SUPFAM" id="SSF46966">
    <property type="entry name" value="Spectrin repeat"/>
    <property type="match status" value="13"/>
</dbReference>
<dbReference type="PROSITE" id="PS00019">
    <property type="entry name" value="ACTININ_1"/>
    <property type="match status" value="1"/>
</dbReference>
<dbReference type="PROSITE" id="PS00020">
    <property type="entry name" value="ACTININ_2"/>
    <property type="match status" value="1"/>
</dbReference>
<dbReference type="PROSITE" id="PS50021">
    <property type="entry name" value="CH"/>
    <property type="match status" value="2"/>
</dbReference>
<dbReference type="PROSITE" id="PS50003">
    <property type="entry name" value="PH_DOMAIN"/>
    <property type="match status" value="1"/>
</dbReference>
<keyword id="KW-0002">3D-structure</keyword>
<keyword id="KW-0007">Acetylation</keyword>
<keyword id="KW-0117">Actin capping</keyword>
<keyword id="KW-0009">Actin-binding</keyword>
<keyword id="KW-0025">Alternative splicing</keyword>
<keyword id="KW-0963">Cytoplasm</keyword>
<keyword id="KW-0206">Cytoskeleton</keyword>
<keyword id="KW-0225">Disease variant</keyword>
<keyword id="KW-0523">Neurodegeneration</keyword>
<keyword id="KW-0597">Phosphoprotein</keyword>
<keyword id="KW-1267">Proteomics identification</keyword>
<keyword id="KW-1185">Reference proteome</keyword>
<keyword id="KW-0677">Repeat</keyword>
<keyword id="KW-0950">Spinocerebellar ataxia</keyword>
<reference key="1">
    <citation type="journal article" date="1997" name="DNA Res.">
        <title>Prediction of the coding sequences of unidentified human genes. VII. The complete sequences of 100 new cDNA clones from brain which can code for large proteins in vitro.</title>
        <authorList>
            <person name="Nagase T."/>
            <person name="Ishikawa K."/>
            <person name="Nakajima D."/>
            <person name="Ohira M."/>
            <person name="Seki N."/>
            <person name="Miyajima N."/>
            <person name="Tanaka A."/>
            <person name="Kotani H."/>
            <person name="Nomura N."/>
            <person name="Ohara O."/>
        </authorList>
    </citation>
    <scope>NUCLEOTIDE SEQUENCE [LARGE SCALE MRNA] (ISOFORM 1)</scope>
    <scope>VARIANT GLY-825</scope>
    <source>
        <tissue>Brain</tissue>
    </source>
</reference>
<reference key="2">
    <citation type="journal article" date="2006" name="Nature">
        <title>Human chromosome 11 DNA sequence and analysis including novel gene identification.</title>
        <authorList>
            <person name="Taylor T.D."/>
            <person name="Noguchi H."/>
            <person name="Totoki Y."/>
            <person name="Toyoda A."/>
            <person name="Kuroki Y."/>
            <person name="Dewar K."/>
            <person name="Lloyd C."/>
            <person name="Itoh T."/>
            <person name="Takeda T."/>
            <person name="Kim D.-W."/>
            <person name="She X."/>
            <person name="Barlow K.F."/>
            <person name="Bloom T."/>
            <person name="Bruford E."/>
            <person name="Chang J.L."/>
            <person name="Cuomo C.A."/>
            <person name="Eichler E."/>
            <person name="FitzGerald M.G."/>
            <person name="Jaffe D.B."/>
            <person name="LaButti K."/>
            <person name="Nicol R."/>
            <person name="Park H.-S."/>
            <person name="Seaman C."/>
            <person name="Sougnez C."/>
            <person name="Yang X."/>
            <person name="Zimmer A.R."/>
            <person name="Zody M.C."/>
            <person name="Birren B.W."/>
            <person name="Nusbaum C."/>
            <person name="Fujiyama A."/>
            <person name="Hattori M."/>
            <person name="Rogers J."/>
            <person name="Lander E.S."/>
            <person name="Sakaki Y."/>
        </authorList>
    </citation>
    <scope>NUCLEOTIDE SEQUENCE [LARGE SCALE GENOMIC DNA]</scope>
</reference>
<reference key="3">
    <citation type="journal article" date="1998" name="Proc. Natl. Acad. Sci. U.S.A.">
        <title>A widely expressed betaIII spectrin associated with Golgi and cytoplasmic vesicles.</title>
        <authorList>
            <person name="Stankewich M.C."/>
            <person name="Tse W.T."/>
            <person name="Peters L.L."/>
            <person name="Ch'ng Y."/>
            <person name="John K.M."/>
            <person name="Stabach P.R."/>
            <person name="Devarajan P."/>
            <person name="Morrow J.S."/>
            <person name="Lux S.E."/>
        </authorList>
    </citation>
    <scope>NUCLEOTIDE SEQUENCE [MRNA] OF 1-34</scope>
    <source>
        <tissue>Brain</tissue>
    </source>
</reference>
<reference key="4">
    <citation type="submission" date="1997-09" db="EMBL/GenBank/DDBJ databases">
        <title>SPTBN2, a new, widely expressed beta III spectrin gene located on human chromosome 11q13 and mouse chromosome 19.</title>
        <authorList>
            <person name="Tse W.T."/>
            <person name="Peters L.L."/>
            <person name="John K.M."/>
            <person name="Lux S.E."/>
        </authorList>
    </citation>
    <scope>NUCLEOTIDE SEQUENCE [MRNA] OF 1900-2390 (ISOFORMS 1 AND 2)</scope>
    <source>
        <tissue>Brain</tissue>
    </source>
</reference>
<reference key="5">
    <citation type="journal article" date="2006" name="Cell">
        <title>Global, in vivo, and site-specific phosphorylation dynamics in signaling networks.</title>
        <authorList>
            <person name="Olsen J.V."/>
            <person name="Blagoev B."/>
            <person name="Gnad F."/>
            <person name="Macek B."/>
            <person name="Kumar C."/>
            <person name="Mortensen P."/>
            <person name="Mann M."/>
        </authorList>
    </citation>
    <scope>PHOSPHORYLATION [LARGE SCALE ANALYSIS] AT SER-2171</scope>
    <scope>IDENTIFICATION BY MASS SPECTROMETRY [LARGE SCALE ANALYSIS]</scope>
    <source>
        <tissue>Cervix carcinoma</tissue>
    </source>
</reference>
<reference key="6">
    <citation type="journal article" date="2008" name="Proc. Natl. Acad. Sci. U.S.A.">
        <title>A quantitative atlas of mitotic phosphorylation.</title>
        <authorList>
            <person name="Dephoure N."/>
            <person name="Zhou C."/>
            <person name="Villen J."/>
            <person name="Beausoleil S.A."/>
            <person name="Bakalarski C.E."/>
            <person name="Elledge S.J."/>
            <person name="Gygi S.P."/>
        </authorList>
    </citation>
    <scope>PHOSPHORYLATION [LARGE SCALE ANALYSIS] AT SER-2171 AND SER-2359</scope>
    <scope>IDENTIFICATION BY MASS SPECTROMETRY [LARGE SCALE ANALYSIS]</scope>
    <source>
        <tissue>Cervix carcinoma</tissue>
    </source>
</reference>
<reference key="7">
    <citation type="journal article" date="2010" name="Sci. Signal.">
        <title>Quantitative phosphoproteomics reveals widespread full phosphorylation site occupancy during mitosis.</title>
        <authorList>
            <person name="Olsen J.V."/>
            <person name="Vermeulen M."/>
            <person name="Santamaria A."/>
            <person name="Kumar C."/>
            <person name="Miller M.L."/>
            <person name="Jensen L.J."/>
            <person name="Gnad F."/>
            <person name="Cox J."/>
            <person name="Jensen T.S."/>
            <person name="Nigg E.A."/>
            <person name="Brunak S."/>
            <person name="Mann M."/>
        </authorList>
    </citation>
    <scope>ACETYLATION [LARGE SCALE ANALYSIS] AT SER-2</scope>
    <scope>PHOSPHORYLATION [LARGE SCALE ANALYSIS] AT SER-2171 AND SER-2359</scope>
    <scope>CLEAVAGE OF INITIATOR METHIONINE [LARGE SCALE ANALYSIS]</scope>
    <scope>IDENTIFICATION BY MASS SPECTROMETRY [LARGE SCALE ANALYSIS]</scope>
    <source>
        <tissue>Cervix carcinoma</tissue>
    </source>
</reference>
<reference key="8">
    <citation type="journal article" date="2011" name="BMC Syst. Biol.">
        <title>Initial characterization of the human central proteome.</title>
        <authorList>
            <person name="Burkard T.R."/>
            <person name="Planyavsky M."/>
            <person name="Kaupe I."/>
            <person name="Breitwieser F.P."/>
            <person name="Buerckstuemmer T."/>
            <person name="Bennett K.L."/>
            <person name="Superti-Furga G."/>
            <person name="Colinge J."/>
        </authorList>
    </citation>
    <scope>IDENTIFICATION BY MASS SPECTROMETRY [LARGE SCALE ANALYSIS]</scope>
</reference>
<reference key="9">
    <citation type="journal article" date="2011" name="Sci. Signal.">
        <title>System-wide temporal characterization of the proteome and phosphoproteome of human embryonic stem cell differentiation.</title>
        <authorList>
            <person name="Rigbolt K.T."/>
            <person name="Prokhorova T.A."/>
            <person name="Akimov V."/>
            <person name="Henningsen J."/>
            <person name="Johansen P.T."/>
            <person name="Kratchmarova I."/>
            <person name="Kassem M."/>
            <person name="Mann M."/>
            <person name="Olsen J.V."/>
            <person name="Blagoev B."/>
        </authorList>
    </citation>
    <scope>PHOSPHORYLATION [LARGE SCALE ANALYSIS] AT SER-2171</scope>
    <scope>IDENTIFICATION BY MASS SPECTROMETRY [LARGE SCALE ANALYSIS]</scope>
</reference>
<reference key="10">
    <citation type="journal article" date="2012" name="PLoS Genet.">
        <title>Recessive mutations in SPTBN2 implicate beta-III spectrin in both cognitive and motor development.</title>
        <authorList>
            <person name="Lise S."/>
            <person name="Clarkson Y."/>
            <person name="Perkins E."/>
            <person name="Kwasniewska A."/>
            <person name="Sadighi Akha E."/>
            <person name="Schnekenberg R.P."/>
            <person name="Suminaite D."/>
            <person name="Hope J."/>
            <person name="Baker I."/>
            <person name="Gregory L."/>
            <person name="Green A."/>
            <person name="Allan C."/>
            <person name="Lamble S."/>
            <person name="Jayawant S."/>
            <person name="Quaghebeur G."/>
            <person name="Cader M.Z."/>
            <person name="Hughes S."/>
            <person name="Armstrong R.J."/>
            <person name="Kanapin A."/>
            <person name="Rimmer A."/>
            <person name="Lunter G."/>
            <person name="Mathieson I."/>
            <person name="Cazier J.B."/>
            <person name="Buck D."/>
            <person name="Taylor J.C."/>
            <person name="Bentley D."/>
            <person name="McVean G."/>
            <person name="Donnelly P."/>
            <person name="Knight S.J."/>
            <person name="Jackson M."/>
            <person name="Ragoussis J."/>
            <person name="Nemeth A.H."/>
        </authorList>
    </citation>
    <scope>INVOLVEMENT IN SCAR14</scope>
</reference>
<reference key="11">
    <citation type="journal article" date="2013" name="J. Proteome Res.">
        <title>Toward a comprehensive characterization of a human cancer cell phosphoproteome.</title>
        <authorList>
            <person name="Zhou H."/>
            <person name="Di Palma S."/>
            <person name="Preisinger C."/>
            <person name="Peng M."/>
            <person name="Polat A.N."/>
            <person name="Heck A.J."/>
            <person name="Mohammed S."/>
        </authorList>
    </citation>
    <scope>PHOSPHORYLATION [LARGE SCALE ANALYSIS] AT SER-2171; THR-2354 AND SER-2359</scope>
    <scope>IDENTIFICATION BY MASS SPECTROMETRY [LARGE SCALE ANALYSIS]</scope>
    <source>
        <tissue>Cervix carcinoma</tissue>
        <tissue>Erythroleukemia</tissue>
    </source>
</reference>
<reference key="12">
    <citation type="journal article" date="2014" name="Eur. J. Hum. Genet.">
        <title>Autosomal dominant SCA5 and autosomal recessive infantile SCA are allelic conditions resulting from SPTBN2 mutations.</title>
        <authorList>
            <person name="Elsayed S.M."/>
            <person name="Heller R."/>
            <person name="Thoenes M."/>
            <person name="Zaki M.S."/>
            <person name="Swan D."/>
            <person name="Elsobky E."/>
            <person name="Zuehlke C."/>
            <person name="Ebermann I."/>
            <person name="Nuernberg G."/>
            <person name="Nuernberg P."/>
            <person name="Bolz H.J."/>
        </authorList>
    </citation>
    <scope>INVOLVEMENT IN SCAR14</scope>
</reference>
<reference key="13">
    <citation type="journal article" date="2014" name="J. Proteomics">
        <title>An enzyme assisted RP-RPLC approach for in-depth analysis of human liver phosphoproteome.</title>
        <authorList>
            <person name="Bian Y."/>
            <person name="Song C."/>
            <person name="Cheng K."/>
            <person name="Dong M."/>
            <person name="Wang F."/>
            <person name="Huang J."/>
            <person name="Sun D."/>
            <person name="Wang L."/>
            <person name="Ye M."/>
            <person name="Zou H."/>
        </authorList>
    </citation>
    <scope>PHOSPHORYLATION [LARGE SCALE ANALYSIS] AT SER-31; SER-959; SER-1073; THR-2354 AND SER-2359</scope>
    <scope>IDENTIFICATION BY MASS SPECTROMETRY [LARGE SCALE ANALYSIS]</scope>
    <source>
        <tissue>Liver</tissue>
    </source>
</reference>
<reference key="14">
    <citation type="submission" date="2004-11" db="PDB data bank">
        <title>Solution structure of pleckstrin homology domain of human beta III spectrin.</title>
        <authorList>
            <consortium name="RIKEN structural genomics initiative (RSGI)"/>
        </authorList>
    </citation>
    <scope>STRUCTURE BY NMR OF 2219-2328</scope>
</reference>
<reference key="15">
    <citation type="submission" date="2005-08" db="PDB data bank">
        <title>Solution structure of the second CH domain of human spectrin beta chain, brain 2.</title>
        <authorList>
            <consortium name="RIKEN structural genomics initiative (RSGI)"/>
        </authorList>
    </citation>
    <scope>STRUCTURE BY NMR OF 178-291</scope>
</reference>
<reference key="16">
    <citation type="journal article" date="2006" name="Nat. Genet.">
        <title>Spectrin mutations cause spinocerebellar ataxia type 5.</title>
        <authorList>
            <person name="Ikeda Y."/>
            <person name="Dick K.A."/>
            <person name="Weatherspoon M.R."/>
            <person name="Gincel D."/>
            <person name="Armbrust K.R."/>
            <person name="Dalton J.C."/>
            <person name="Stevanin G."/>
            <person name="Duerr A."/>
            <person name="Zuehlke C."/>
            <person name="Buerk K."/>
            <person name="Clark H.B."/>
            <person name="Brice A."/>
            <person name="Rothstein J.D."/>
            <person name="Schut L.J."/>
            <person name="Day J.W."/>
            <person name="Ranum L.P.W."/>
        </authorList>
    </citation>
    <scope>VARIANTS SCA5 PRO-253; 532-GLU--MET-544 DEL AND 629-LEU--ARG-634 DELINS TRP</scope>
</reference>
<reference key="17">
    <citation type="journal article" date="2006" name="Science">
        <title>The consensus coding sequences of human breast and colorectal cancers.</title>
        <authorList>
            <person name="Sjoeblom T."/>
            <person name="Jones S."/>
            <person name="Wood L.D."/>
            <person name="Parsons D.W."/>
            <person name="Lin J."/>
            <person name="Barber T.D."/>
            <person name="Mandelker D."/>
            <person name="Leary R.J."/>
            <person name="Ptak J."/>
            <person name="Silliman N."/>
            <person name="Szabo S."/>
            <person name="Buckhaults P."/>
            <person name="Farrell C."/>
            <person name="Meeh P."/>
            <person name="Markowitz S.D."/>
            <person name="Willis J."/>
            <person name="Dawson D."/>
            <person name="Willson J.K.V."/>
            <person name="Gazdar A.F."/>
            <person name="Hartigan J."/>
            <person name="Wu L."/>
            <person name="Liu C."/>
            <person name="Parmigiani G."/>
            <person name="Park B.H."/>
            <person name="Bachman K.E."/>
            <person name="Papadopoulos N."/>
            <person name="Vogelstein B."/>
            <person name="Kinzler K.W."/>
            <person name="Velculescu V.E."/>
        </authorList>
    </citation>
    <scope>VARIANT [LARGE SCALE ANALYSIS] LYS-774</scope>
</reference>
<reference key="18">
    <citation type="journal article" date="2013" name="J. Child Neurol.">
        <title>Case of infantile onset spinocerebellar ataxia type 5.</title>
        <authorList>
            <person name="Jacob F.D."/>
            <person name="Ho E.S."/>
            <person name="Martinez-Ojeda M."/>
            <person name="Darras B.T."/>
            <person name="Khwaja O.S."/>
        </authorList>
    </citation>
    <scope>VARIANT SCA5 TRP-480</scope>
</reference>
<proteinExistence type="evidence at protein level"/>
<feature type="initiator methionine" description="Removed" evidence="16">
    <location>
        <position position="1"/>
    </location>
</feature>
<feature type="chain" id="PRO_0000073463" description="Spectrin beta chain, non-erythrocytic 2">
    <location>
        <begin position="2"/>
        <end position="2390"/>
    </location>
</feature>
<feature type="domain" description="Calponin-homology (CH) 1" evidence="3">
    <location>
        <begin position="57"/>
        <end position="161"/>
    </location>
</feature>
<feature type="domain" description="Calponin-homology (CH) 2" evidence="3">
    <location>
        <begin position="176"/>
        <end position="281"/>
    </location>
</feature>
<feature type="repeat" description="Spectrin 1" evidence="2">
    <location>
        <begin position="306"/>
        <end position="414"/>
    </location>
</feature>
<feature type="repeat" description="Spectrin 2" evidence="2">
    <location>
        <begin position="427"/>
        <end position="527"/>
    </location>
</feature>
<feature type="repeat" description="Spectrin 3" evidence="2">
    <location>
        <begin position="532"/>
        <end position="639"/>
    </location>
</feature>
<feature type="repeat" description="Spectrin 4" evidence="2">
    <location>
        <begin position="642"/>
        <end position="744"/>
    </location>
</feature>
<feature type="repeat" description="Spectrin 5" evidence="2">
    <location>
        <begin position="749"/>
        <end position="849"/>
    </location>
</feature>
<feature type="repeat" description="Spectrin 6" evidence="2">
    <location>
        <begin position="855"/>
        <end position="954"/>
    </location>
</feature>
<feature type="repeat" description="Spectrin 7" evidence="2">
    <location>
        <begin position="960"/>
        <end position="1063"/>
    </location>
</feature>
<feature type="repeat" description="Spectrin 8" evidence="2">
    <location>
        <begin position="1066"/>
        <end position="1169"/>
    </location>
</feature>
<feature type="repeat" description="Spectrin 9" evidence="2">
    <location>
        <begin position="1174"/>
        <end position="1262"/>
    </location>
</feature>
<feature type="repeat" description="Spectrin 10" evidence="2">
    <location>
        <begin position="1279"/>
        <end position="1379"/>
    </location>
</feature>
<feature type="repeat" description="Spectrin 11" evidence="2">
    <location>
        <begin position="1384"/>
        <end position="1485"/>
    </location>
</feature>
<feature type="repeat" description="Spectrin 12" evidence="2">
    <location>
        <begin position="1489"/>
        <end position="1586"/>
    </location>
</feature>
<feature type="repeat" description="Spectrin 13" evidence="2">
    <location>
        <begin position="1589"/>
        <end position="1692"/>
    </location>
</feature>
<feature type="repeat" description="Spectrin 14" evidence="2">
    <location>
        <begin position="1696"/>
        <end position="1797"/>
    </location>
</feature>
<feature type="repeat" description="Spectrin 15" evidence="2">
    <location>
        <begin position="1801"/>
        <end position="1904"/>
    </location>
</feature>
<feature type="repeat" description="Spectrin 16" evidence="2">
    <location>
        <begin position="1910"/>
        <end position="2010"/>
    </location>
</feature>
<feature type="repeat" description="Spectrin 17" evidence="2">
    <location>
        <begin position="2017"/>
        <end position="2076"/>
    </location>
</feature>
<feature type="domain" description="PH" evidence="4">
    <location>
        <begin position="2218"/>
        <end position="2328"/>
    </location>
</feature>
<feature type="region of interest" description="Actin-binding">
    <location>
        <begin position="2"/>
        <end position="278"/>
    </location>
</feature>
<feature type="region of interest" description="Disordered" evidence="5">
    <location>
        <begin position="2081"/>
        <end position="2222"/>
    </location>
</feature>
<feature type="region of interest" description="Disordered" evidence="5">
    <location>
        <begin position="2331"/>
        <end position="2390"/>
    </location>
</feature>
<feature type="compositionally biased region" description="Basic and acidic residues" evidence="5">
    <location>
        <begin position="2081"/>
        <end position="2096"/>
    </location>
</feature>
<feature type="compositionally biased region" description="Polar residues" evidence="5">
    <location>
        <begin position="2116"/>
        <end position="2125"/>
    </location>
</feature>
<feature type="compositionally biased region" description="Basic and acidic residues" evidence="5">
    <location>
        <begin position="2370"/>
        <end position="2383"/>
    </location>
</feature>
<feature type="modified residue" description="N-acetylserine" evidence="16">
    <location>
        <position position="2"/>
    </location>
</feature>
<feature type="modified residue" description="Phosphoserine" evidence="1">
    <location>
        <position position="6"/>
    </location>
</feature>
<feature type="modified residue" description="Phosphoserine" evidence="19">
    <location>
        <position position="31"/>
    </location>
</feature>
<feature type="modified residue" description="Phosphoserine" evidence="19">
    <location>
        <position position="959"/>
    </location>
</feature>
<feature type="modified residue" description="Phosphoserine" evidence="19">
    <location>
        <position position="1073"/>
    </location>
</feature>
<feature type="modified residue" description="Phosphoserine" evidence="14 15 16 17 18">
    <location>
        <position position="2171"/>
    </location>
</feature>
<feature type="modified residue" description="Phosphoserine" evidence="1">
    <location>
        <position position="2199"/>
    </location>
</feature>
<feature type="modified residue" description="Phosphothreonine" evidence="18 19">
    <location>
        <position position="2354"/>
    </location>
</feature>
<feature type="modified residue" description="Phosphoserine" evidence="15 16 18 19">
    <location>
        <position position="2359"/>
    </location>
</feature>
<feature type="splice variant" id="VSP_000722" description="In isoform 2." evidence="12">
    <original>AEMSSWLRVVNAAIATASSASGEPEEPVVPSTTRGMTRAMTMPPVSPVGAEGPVVLRSKDGREREREKRFSFFKKNK</original>
    <variation>VSCPSCSSLSVPFQKLPAADSPSFPVLPLFPGLVLCGKTGCVRRPHQAALPV</variation>
    <location>
        <begin position="2314"/>
        <end position="2390"/>
    </location>
</feature>
<feature type="sequence variant" id="VAR_026767" description="In SCA5; dbSNP:rs121918306." evidence="6">
    <original>L</original>
    <variation>P</variation>
    <location>
        <position position="253"/>
    </location>
</feature>
<feature type="sequence variant" id="VAR_070232" description="In SCA5; dbSNP:rs397514749." evidence="8">
    <original>R</original>
    <variation>W</variation>
    <location>
        <position position="480"/>
    </location>
</feature>
<feature type="sequence variant" id="VAR_026768" description="In SCA5." evidence="6">
    <location>
        <begin position="532"/>
        <end position="544"/>
    </location>
</feature>
<feature type="sequence variant" id="VAR_026769" description="In SCA5." evidence="6">
    <original>LAAARR</original>
    <variation>W</variation>
    <location>
        <begin position="629"/>
        <end position="634"/>
    </location>
</feature>
<feature type="sequence variant" id="VAR_035458" description="In a colorectal cancer sample; somatic mutation." evidence="7">
    <original>E</original>
    <variation>K</variation>
    <location>
        <position position="774"/>
    </location>
</feature>
<feature type="sequence variant" id="VAR_026770" description="In dbSNP:rs4930388." evidence="11">
    <original>S</original>
    <variation>G</variation>
    <location>
        <position position="825"/>
    </location>
</feature>
<feature type="sequence variant" id="VAR_048631" description="In dbSNP:rs36054877.">
    <original>E</original>
    <variation>K</variation>
    <location>
        <position position="835"/>
    </location>
</feature>
<feature type="sequence variant" id="VAR_026771" description="In dbSNP:rs506028.">
    <original>V</original>
    <variation>A</variation>
    <location>
        <position position="1034"/>
    </location>
</feature>
<feature type="helix" evidence="21">
    <location>
        <begin position="180"/>
        <end position="191"/>
    </location>
</feature>
<feature type="strand" evidence="21">
    <location>
        <begin position="193"/>
        <end position="195"/>
    </location>
</feature>
<feature type="strand" evidence="21">
    <location>
        <begin position="205"/>
        <end position="208"/>
    </location>
</feature>
<feature type="helix" evidence="21">
    <location>
        <begin position="209"/>
        <end position="218"/>
    </location>
</feature>
<feature type="turn" evidence="21">
    <location>
        <begin position="220"/>
        <end position="222"/>
    </location>
</feature>
<feature type="turn" evidence="21">
    <location>
        <begin position="225"/>
        <end position="227"/>
    </location>
</feature>
<feature type="helix" evidence="21">
    <location>
        <begin position="234"/>
        <end position="246"/>
    </location>
</feature>
<feature type="turn" evidence="21">
    <location>
        <begin position="256"/>
        <end position="258"/>
    </location>
</feature>
<feature type="strand" evidence="21">
    <location>
        <begin position="261"/>
        <end position="263"/>
    </location>
</feature>
<feature type="helix" evidence="21">
    <location>
        <begin position="266"/>
        <end position="282"/>
    </location>
</feature>
<feature type="strand" evidence="21">
    <location>
        <begin position="283"/>
        <end position="285"/>
    </location>
</feature>
<feature type="strand" evidence="20">
    <location>
        <begin position="2221"/>
        <end position="2233"/>
    </location>
</feature>
<feature type="strand" evidence="20">
    <location>
        <begin position="2244"/>
        <end position="2251"/>
    </location>
</feature>
<feature type="strand" evidence="20">
    <location>
        <begin position="2254"/>
        <end position="2260"/>
    </location>
</feature>
<feature type="helix" evidence="20">
    <location>
        <begin position="2261"/>
        <end position="2264"/>
    </location>
</feature>
<feature type="turn" evidence="20">
    <location>
        <begin position="2265"/>
        <end position="2267"/>
    </location>
</feature>
<feature type="strand" evidence="20">
    <location>
        <begin position="2269"/>
        <end position="2272"/>
    </location>
</feature>
<feature type="strand" evidence="20">
    <location>
        <begin position="2282"/>
        <end position="2285"/>
    </location>
</feature>
<feature type="strand" evidence="20">
    <location>
        <begin position="2293"/>
        <end position="2299"/>
    </location>
</feature>
<feature type="strand" evidence="20">
    <location>
        <begin position="2301"/>
        <end position="2303"/>
    </location>
</feature>
<feature type="strand" evidence="20">
    <location>
        <begin position="2305"/>
        <end position="2309"/>
    </location>
</feature>
<feature type="helix" evidence="20">
    <location>
        <begin position="2313"/>
        <end position="2328"/>
    </location>
</feature>
<sequence length="2390" mass="271325">MSSTLSPTDFDSLEIQGQYSDINNRWDLPDSDWDNDSSSARLFERSRIKALADEREAVQKKTFTKWVNSHLARVTCRVGDLYSDLRDGRNLLRLLEVLSGEILPKPTKGRMRIHCLENVDKALQFLKEQKVHLENMGSHDIVDGNHRLTLGLVWTIILRFQIQDISVETEDNKEKKSAKDALLLWCQMKTAGYPNVNVHNFTTSWRDGLAFNAIVHKHRPDLLDFESLKKCNAHYNLQNAFNLAEKELGLTKLLDPEDVNVDQPDEKSIITYVATYYHYFSKMKALAVEGKRIGKVLDHAMEAERLVEKYESLASELLQWIEQTIVTLNDRQLANSLSGVQNQLQSFNSYRTVEKPPKFTEKGNLEVLLFTIQSKLRANNQKVYTPREGRLISDINKAWERLEKAEHERELALRTELIRQEKLEQLAARFDRKAAMRETWLSENQRLVSQDNFGLELAAVEAAVRKHEAIETDIVAYSGRVQAVDAVAAELAAERYHDIKRIAARQHNVARLWDFLRQMVAARRERLLLNLELQKVFQDLLYLMDWMEEMKGRLQSQDLGRHLAGVEDLLQLHELVEADIAVQAERVRAVSASALRFCNPGKEYRPCDPQLVSERVAKLEQSYEALCELAAARRARLEESRRLWRFLWEVGEAEAWVREQQHLLASADTGRDLTGALRLLNKHTALRGEMSGRLGPLKLTLEQGQQLVAEGHPGASQASARAAELQAQWERLEALAEERAQRLAQAASLYQFQADANDMEAWLVDALRLVSSPELGHDEFSTQALARQHRALEEEIRSHRPTLDALREQAAALPPTLSRTPEVQSRVPTLERHYEELQARAGERARALEAALALYTMLSEAGACGLWVEEKEQWLNGLALPERLEDLEVVQQRFETLEPEMNTLAAQITAVNDIAEQLLKANPPGKDRIVNTQEQLNHRWQQFRRLADGKKAALTSALSIQNYHLECTETQAWMREKTKVIESTQGLGNDLAGVLALQRKLAGTERDLEAIAARVGELTREANALAAGHPAQAVAINARLREVQTGWEDLRATMRRREESLGEARRLQDFLRSLDDFQAWLGRTQTAVASEEGPATLPEAEALLAQHAALRGEVERAQSEYSRLRALGEEVTRDQADPQCLFLRQRLEALGTGWEELGRMWESRQGRLAQAHGFQGFLRDARQAEGVLSSQEYVLSHTEMPGTLQAADAAIKKLEDFMSTMDANGERIHGLLEAGRQLVSEGNIHADKIREKADSIERRHKKNQDAAQQFLGRLRDNREQQHFLQDCHELKLWIDEKMLTAQDVSYDEARNLHTKWQKHQAFMAELAANKDWLDKVDKEGRELTLEKPELKALVSEKLRDLHRRWDELETTTQAKARSLFDANRAELFAQSCCALESWLESLQAQLHSDDYGKDLTSVNILLKKQQMLEWEMAVREKEVEAIQAQAKALAQEDQGAGEVERTSRAVEEKFRALCQPMRERCRRLQASREQHQFHRDVEDEILWVTERLPMASSMEHGKDLPSVQLLMKKNQTLQKEIQGHEPRIADLRERQRALGAAAAGPELAELQEMWKRLGHELELRGKRLEDALRAQQFYRDAAEAEAWMGEQELHMMGQEKAKDELSAQAEVKKHQVLEQALADYAQTIHQLAASSQDMIDHEHPESTRISIRQAQVDKLYAGLKELAGERRERLQEHLRLCQLRRELDDLEQWIQEREVVAASHELGQDYEHVTMLRDKFREFSRDTSTIGQERVDSANALANGLIAGGHAARATVAEWKDSLNEAWADLLELLDTRGQVLAAAYELQRFLHGARQALARVQHKQQQLPDGTGRDLNAAEALQRRHCAYEHDIQALSPQVQQVQDDGHRLQKAYAGDKAEEIGRHMQAVAEAWAQLQGSSAARRQLLLDTTDKFRFFKAVRELMLWMDEVNLQMDAQERPRDVSSADLVIKNQQGIKAEIEARADRFSSCIDMGKELLARSHYAAEEISEKLSQLQARRQETAEKWQEKMDWLQLVLEVLVFGRDAGMAEAWLCSQEPLVRSAELGCTVDEVESLIKRHEAFQKSAVAWEERFCALEKLTALEEREKERKRKREEEERRKQPPAPEPTASVPPGDLVGGQTASDTTWDGTQPRPPPSTQAPSVNGVCTDGEPSQPLLGQQRLEHSSFPEGPGPGSGDEANGPRGERQTRTRGPAPSAMPQSRSTESAHAATLPPRGPEPSAQEQMEGMLCRKQEMEAFGKKAANRSWQNVYCVLRRGSLGFYKDAKAASAGVPYHGEVPVSLARAQGSVAFDYRKRKHVFKLGLQDGKEYLFQAKDEAEMSSWLRVVNAAIATASSASGEPEEPVVPSTTRGMTRAMTMPPVSPVGAEGPVVLRSKDGREREREKRFSFFKKNK</sequence>
<organism>
    <name type="scientific">Homo sapiens</name>
    <name type="common">Human</name>
    <dbReference type="NCBI Taxonomy" id="9606"/>
    <lineage>
        <taxon>Eukaryota</taxon>
        <taxon>Metazoa</taxon>
        <taxon>Chordata</taxon>
        <taxon>Craniata</taxon>
        <taxon>Vertebrata</taxon>
        <taxon>Euteleostomi</taxon>
        <taxon>Mammalia</taxon>
        <taxon>Eutheria</taxon>
        <taxon>Euarchontoglires</taxon>
        <taxon>Primates</taxon>
        <taxon>Haplorrhini</taxon>
        <taxon>Catarrhini</taxon>
        <taxon>Hominidae</taxon>
        <taxon>Homo</taxon>
    </lineage>
</organism>
<gene>
    <name type="primary">SPTBN2</name>
    <name type="synonym">KIAA0302</name>
    <name type="synonym">SCA5</name>
</gene>